<keyword id="KW-0119">Carbohydrate metabolism</keyword>
<keyword id="KW-1003">Cell membrane</keyword>
<keyword id="KW-0472">Membrane</keyword>
<keyword id="KW-0521">NADP</keyword>
<keyword id="KW-0560">Oxidoreductase</keyword>
<keyword id="KW-1185">Reference proteome</keyword>
<keyword id="KW-0859">Xylose metabolism</keyword>
<reference key="1">
    <citation type="journal article" date="1998" name="Science">
        <title>Genome sequence of the nematode C. elegans: a platform for investigating biology.</title>
        <authorList>
            <consortium name="The C. elegans sequencing consortium"/>
        </authorList>
    </citation>
    <scope>NUCLEOTIDE SEQUENCE [LARGE SCALE GENOMIC DNA]</scope>
    <source>
        <strain>Bristol N2</strain>
    </source>
</reference>
<reference key="2">
    <citation type="journal article" date="2011" name="Chem. Biol. Interact.">
        <title>Bioinformatic and biochemical characterization of DCXR and DHRS2/4 from Caenorhabditis elegans.</title>
        <authorList>
            <person name="Kisiela M."/>
            <person name="El-Hawari Y."/>
            <person name="Martin H.J."/>
            <person name="Maser E."/>
        </authorList>
    </citation>
    <scope>FUNCTION</scope>
    <scope>ACTIVITY REGULATION</scope>
    <scope>BIOPHYSICOCHEMICAL PROPERTIES</scope>
</reference>
<reference key="3">
    <citation type="journal article" date="2011" name="FEBS Lett.">
        <title>DHS-21, a dicarbonyl/L-xylulose reductase (DCXR) ortholog, regulates longevity and reproduction in Caenorhabditis elegans.</title>
        <authorList>
            <person name="Son L.T."/>
            <person name="Ko K.M."/>
            <person name="Cho J.H."/>
            <person name="Singaravelu G."/>
            <person name="Chatterjee I."/>
            <person name="Choi T.W."/>
            <person name="Song H.O."/>
            <person name="Yu J.R."/>
            <person name="Park B.J."/>
            <person name="Lee S.K."/>
            <person name="Ahnn J."/>
        </authorList>
    </citation>
    <scope>FUNCTION</scope>
    <scope>CATALYTIC ACTIVITY</scope>
    <scope>BIOPHYSICOCHEMICAL PROPERTIES</scope>
    <scope>SUBCELLULAR LOCATION</scope>
    <scope>TISSUE SPECIFICITY</scope>
    <scope>DEVELOPMENTAL STAGE</scope>
    <scope>DISRUPTION PHENOTYPE</scope>
</reference>
<comment type="function">
    <text evidence="3 4">Catalyzes the NADPH-dependent reduction of L-xylulose, D-xylulose, L-(+) erythrulose, D-erythrose, D-threose, L-ribulose, 1,4-dibromo-2,3-butanedione and 2,3-heptanedione (PubMed:21477590). Also active against isatin, 9,10-phenanthrenequinone, menadione, 2,3-hexaenadione and 3,4-hexahenadione (PubMed:21300042). No activity observed when tested using NADH rather than NADPH (PubMed:21300042).</text>
</comment>
<comment type="catalytic activity">
    <reaction evidence="4">
        <text>xylitol + NADP(+) = L-xylulose + NADPH + H(+)</text>
        <dbReference type="Rhea" id="RHEA:17025"/>
        <dbReference type="ChEBI" id="CHEBI:15378"/>
        <dbReference type="ChEBI" id="CHEBI:17151"/>
        <dbReference type="ChEBI" id="CHEBI:17399"/>
        <dbReference type="ChEBI" id="CHEBI:57783"/>
        <dbReference type="ChEBI" id="CHEBI:58349"/>
        <dbReference type="EC" id="1.1.1.10"/>
    </reaction>
</comment>
<comment type="activity regulation">
    <text evidence="3">Strongly inhibited by 10% dimethyl sulfoxide.</text>
</comment>
<comment type="biophysicochemical properties">
    <kinetics>
        <KM evidence="3">2.65 mM for isatin (at 25 degrees Celsius)</KM>
        <KM evidence="4">0.66 mM for L-xylulose (at 25 degrees Celsius)</KM>
        <KM evidence="4">0.17 mM for L-(+) erythrulose (at 25 degrees Celsius)</KM>
        <KM evidence="4">0.27 mM for D-erythrose (at 25 degrees Celsius)</KM>
        <KM evidence="4">0.68 mM for D-threose (at 25 degrees Celsius)</KM>
        <KM evidence="4">2.58 mM for D-xylulose (at 25 degrees Celsius)</KM>
        <KM evidence="4">0.18 mM for L-ribulose (at 25 degrees Celsius)</KM>
        <KM evidence="4">8.54 mM for 1,4-dibromo-2,3-butanedione (at 25 degrees Celsius)</KM>
        <KM evidence="4">0.02 mM for 2,3-heptanedione (at 25 degrees Celsius)</KM>
        <text evidence="3">The KM value for isatin is approximate as substrate saturation was not reached.</text>
    </kinetics>
</comment>
<comment type="subunit">
    <text evidence="1">Homotetramer.</text>
</comment>
<comment type="subcellular location">
    <subcellularLocation>
        <location evidence="4">Cell membrane</location>
    </subcellularLocation>
    <text evidence="4">Detected on the cell membrane of spermatids.</text>
</comment>
<comment type="tissue specificity">
    <text evidence="4">Expressed in intestine, gonad and spermatids (at protein level). Expressed in intestine, uterine seam, gonadal sheath cells, spermathecal-uterus valve and spermatids.</text>
</comment>
<comment type="developmental stage">
    <text evidence="4">Detected at the two-fold embryo stage. Expressed in the intestine during L1 to L3, followed by expression in uterine seam, gonadal sheath cells and spermathecal-uterus valve at L4.</text>
</comment>
<comment type="disruption phenotype">
    <text evidence="4">Reduced life span and impaired egg-laying function resulting in the retention of eggs. Exogenous addition of serotonin, which triggers vulval muscle contraction, or imipranine, a serotonin uptake inhibitor, rescues the ability to lay eggs, showing that the morphology of the vulva muscles and HSN neurons is normal.</text>
</comment>
<comment type="similarity">
    <text evidence="6">Belongs to the short-chain dehydrogenases/reductases (SDR) family.</text>
</comment>
<proteinExistence type="evidence at protein level"/>
<feature type="chain" id="PRO_0000054549" description="L-xylulose reductase">
    <location>
        <begin position="1"/>
        <end position="251"/>
    </location>
</feature>
<feature type="active site" description="Proton acceptor" evidence="2">
    <location>
        <position position="156"/>
    </location>
</feature>
<feature type="binding site" evidence="1">
    <location>
        <begin position="13"/>
        <end position="42"/>
    </location>
    <ligand>
        <name>NADP(+)</name>
        <dbReference type="ChEBI" id="CHEBI:58349"/>
    </ligand>
</feature>
<feature type="binding site" evidence="1">
    <location>
        <position position="143"/>
    </location>
    <ligand>
        <name>substrate</name>
    </ligand>
</feature>
<feature type="binding site" evidence="1">
    <location>
        <position position="160"/>
    </location>
    <ligand>
        <name>NADP(+)</name>
        <dbReference type="ChEBI" id="CHEBI:58349"/>
    </ligand>
</feature>
<organism evidence="7">
    <name type="scientific">Caenorhabditis elegans</name>
    <dbReference type="NCBI Taxonomy" id="6239"/>
    <lineage>
        <taxon>Eukaryota</taxon>
        <taxon>Metazoa</taxon>
        <taxon>Ecdysozoa</taxon>
        <taxon>Nematoda</taxon>
        <taxon>Chromadorea</taxon>
        <taxon>Rhabditida</taxon>
        <taxon>Rhabditina</taxon>
        <taxon>Rhabditomorpha</taxon>
        <taxon>Rhabditoidea</taxon>
        <taxon>Rhabditidae</taxon>
        <taxon>Peloderinae</taxon>
        <taxon>Caenorhabditis</taxon>
    </lineage>
</organism>
<gene>
    <name evidence="8" type="primary">dhs-21</name>
    <name evidence="8" type="ORF">R11D1.11</name>
</gene>
<accession>Q21929</accession>
<accession>Q27GP8</accession>
<protein>
    <recommendedName>
        <fullName evidence="1">L-xylulose reductase</fullName>
        <shortName>XR</shortName>
        <ecNumber evidence="4">1.1.1.10</ecNumber>
    </recommendedName>
    <alternativeName>
        <fullName evidence="5">Dicarbonyl/L-xylulose reductase</fullName>
        <shortName evidence="5">DCXR</shortName>
    </alternativeName>
    <alternativeName>
        <fullName evidence="8">Short-chain dehydrogenase 21</fullName>
    </alternativeName>
</protein>
<dbReference type="EC" id="1.1.1.10" evidence="4"/>
<dbReference type="EMBL" id="Z75547">
    <property type="protein sequence ID" value="CAA99897.2"/>
    <property type="molecule type" value="Genomic_DNA"/>
</dbReference>
<dbReference type="EMBL" id="Z75527">
    <property type="protein sequence ID" value="CAA99897.2"/>
    <property type="status" value="JOINED"/>
    <property type="molecule type" value="Genomic_DNA"/>
</dbReference>
<dbReference type="PIR" id="T24180">
    <property type="entry name" value="T24180"/>
</dbReference>
<dbReference type="RefSeq" id="NP_506182.2">
    <property type="nucleotide sequence ID" value="NM_073781.8"/>
</dbReference>
<dbReference type="SMR" id="Q21929"/>
<dbReference type="BioGRID" id="44761">
    <property type="interactions" value="40"/>
</dbReference>
<dbReference type="FunCoup" id="Q21929">
    <property type="interactions" value="382"/>
</dbReference>
<dbReference type="STRING" id="6239.R11D1.11.1"/>
<dbReference type="PaxDb" id="6239-R11D1.11"/>
<dbReference type="PeptideAtlas" id="Q21929"/>
<dbReference type="EnsemblMetazoa" id="R11D1.11.1">
    <property type="protein sequence ID" value="R11D1.11.1"/>
    <property type="gene ID" value="WBGene00000984"/>
</dbReference>
<dbReference type="GeneID" id="179741"/>
<dbReference type="KEGG" id="cel:CELE_R11D1.11"/>
<dbReference type="UCSC" id="R11D1.11">
    <property type="organism name" value="c. elegans"/>
</dbReference>
<dbReference type="AGR" id="WB:WBGene00000984"/>
<dbReference type="CTD" id="179741"/>
<dbReference type="WormBase" id="R11D1.11">
    <property type="protein sequence ID" value="CE39954"/>
    <property type="gene ID" value="WBGene00000984"/>
    <property type="gene designation" value="dhs-21"/>
</dbReference>
<dbReference type="eggNOG" id="KOG1207">
    <property type="taxonomic scope" value="Eukaryota"/>
</dbReference>
<dbReference type="GeneTree" id="ENSGT00940000154873"/>
<dbReference type="HOGENOM" id="CLU_010194_1_1_1"/>
<dbReference type="InParanoid" id="Q21929"/>
<dbReference type="OMA" id="FPQWGAY"/>
<dbReference type="OrthoDB" id="47007at2759"/>
<dbReference type="PhylomeDB" id="Q21929"/>
<dbReference type="BRENDA" id="1.1.1.10">
    <property type="organism ID" value="1045"/>
</dbReference>
<dbReference type="Reactome" id="R-CEL-5661270">
    <property type="pathway name" value="Formation of xylulose-5-phosphate"/>
</dbReference>
<dbReference type="SABIO-RK" id="Q21929"/>
<dbReference type="PRO" id="PR:Q21929"/>
<dbReference type="Proteomes" id="UP000001940">
    <property type="component" value="Chromosome V"/>
</dbReference>
<dbReference type="Bgee" id="WBGene00000984">
    <property type="expression patterns" value="Expressed in larva and 3 other cell types or tissues"/>
</dbReference>
<dbReference type="GO" id="GO:0005886">
    <property type="term" value="C:plasma membrane"/>
    <property type="evidence" value="ECO:0000314"/>
    <property type="project" value="WormBase"/>
</dbReference>
<dbReference type="GO" id="GO:0004090">
    <property type="term" value="F:carbonyl reductase (NADPH) activity"/>
    <property type="evidence" value="ECO:0000314"/>
    <property type="project" value="UniProtKB"/>
</dbReference>
<dbReference type="GO" id="GO:0003824">
    <property type="term" value="F:catalytic activity"/>
    <property type="evidence" value="ECO:0000314"/>
    <property type="project" value="UniProtKB"/>
</dbReference>
<dbReference type="GO" id="GO:0050038">
    <property type="term" value="F:L-xylulose reductase (NADPH) activity"/>
    <property type="evidence" value="ECO:0000314"/>
    <property type="project" value="WormBase"/>
</dbReference>
<dbReference type="GO" id="GO:0042732">
    <property type="term" value="P:D-xylose metabolic process"/>
    <property type="evidence" value="ECO:0007669"/>
    <property type="project" value="UniProtKB-KW"/>
</dbReference>
<dbReference type="GO" id="GO:0006006">
    <property type="term" value="P:glucose metabolic process"/>
    <property type="evidence" value="ECO:0000250"/>
    <property type="project" value="UniProtKB"/>
</dbReference>
<dbReference type="GO" id="GO:0005998">
    <property type="term" value="P:xylulose catabolic process"/>
    <property type="evidence" value="ECO:0000314"/>
    <property type="project" value="WormBase"/>
</dbReference>
<dbReference type="GO" id="GO:0005997">
    <property type="term" value="P:xylulose metabolic process"/>
    <property type="evidence" value="ECO:0000250"/>
    <property type="project" value="UniProtKB"/>
</dbReference>
<dbReference type="CDD" id="cd05351">
    <property type="entry name" value="XR_like_SDR_c"/>
    <property type="match status" value="1"/>
</dbReference>
<dbReference type="FunFam" id="3.40.50.720:FF:000214">
    <property type="entry name" value="L-xylulose reductase"/>
    <property type="match status" value="1"/>
</dbReference>
<dbReference type="Gene3D" id="3.40.50.720">
    <property type="entry name" value="NAD(P)-binding Rossmann-like Domain"/>
    <property type="match status" value="1"/>
</dbReference>
<dbReference type="InterPro" id="IPR051737">
    <property type="entry name" value="L-xylulose/Carbonyl_redctase"/>
</dbReference>
<dbReference type="InterPro" id="IPR036291">
    <property type="entry name" value="NAD(P)-bd_dom_sf"/>
</dbReference>
<dbReference type="InterPro" id="IPR020904">
    <property type="entry name" value="Sc_DH/Rdtase_CS"/>
</dbReference>
<dbReference type="InterPro" id="IPR002347">
    <property type="entry name" value="SDR_fam"/>
</dbReference>
<dbReference type="PANTHER" id="PTHR44252">
    <property type="entry name" value="D-ERYTHRULOSE REDUCTASE"/>
    <property type="match status" value="1"/>
</dbReference>
<dbReference type="PANTHER" id="PTHR44252:SF3">
    <property type="entry name" value="D-ERYTHRULOSE REDUCTASE-RELATED"/>
    <property type="match status" value="1"/>
</dbReference>
<dbReference type="Pfam" id="PF13561">
    <property type="entry name" value="adh_short_C2"/>
    <property type="match status" value="1"/>
</dbReference>
<dbReference type="PRINTS" id="PR00081">
    <property type="entry name" value="GDHRDH"/>
</dbReference>
<dbReference type="PRINTS" id="PR00080">
    <property type="entry name" value="SDRFAMILY"/>
</dbReference>
<dbReference type="SUPFAM" id="SSF51735">
    <property type="entry name" value="NAD(P)-binding Rossmann-fold domains"/>
    <property type="match status" value="1"/>
</dbReference>
<dbReference type="PROSITE" id="PS00061">
    <property type="entry name" value="ADH_SHORT"/>
    <property type="match status" value="1"/>
</dbReference>
<sequence length="251" mass="27219">MPANYDFTDKRILVTGASQGIGKEICLSLAKAGAQVIAFARNEANLLSLVKETTSLRYTIIPIVGDVSANEEVLFKLIVPHFPIHGLVNNAGIATNHAIGQITQQSIDRTFAVNVRGPILIAQLVARNFVDRQIKGSIVNISSQAAIRPLDNHTVYCASKAALDMVTRCLANELGSQNIRVNSVNPTVVMTDMGRDNWSDPDKKKKMLDRMPIKRFAEVDEVVNAVLFLLSDNASMTTGSTLPVDGGFSNN</sequence>
<name>DCXR_CAEEL</name>
<evidence type="ECO:0000250" key="1">
    <source>
        <dbReference type="UniProtKB" id="Q7Z4W1"/>
    </source>
</evidence>
<evidence type="ECO:0000255" key="2">
    <source>
        <dbReference type="PROSITE-ProRule" id="PRU10001"/>
    </source>
</evidence>
<evidence type="ECO:0000269" key="3">
    <source>
    </source>
</evidence>
<evidence type="ECO:0000269" key="4">
    <source>
    </source>
</evidence>
<evidence type="ECO:0000303" key="5">
    <source>
    </source>
</evidence>
<evidence type="ECO:0000305" key="6"/>
<evidence type="ECO:0000312" key="7">
    <source>
        <dbReference type="EMBL" id="CAA99897.2"/>
    </source>
</evidence>
<evidence type="ECO:0000312" key="8">
    <source>
        <dbReference type="WormBase" id="R11D1.11"/>
    </source>
</evidence>